<proteinExistence type="inferred from homology"/>
<feature type="chain" id="PRO_0000349864" description="tRNA-specific 2-thiouridylase MnmA">
    <location>
        <begin position="1"/>
        <end position="371"/>
    </location>
</feature>
<feature type="region of interest" description="Interaction with target base in tRNA" evidence="1">
    <location>
        <begin position="98"/>
        <end position="100"/>
    </location>
</feature>
<feature type="region of interest" description="Interaction with tRNA" evidence="1">
    <location>
        <begin position="150"/>
        <end position="152"/>
    </location>
</feature>
<feature type="region of interest" description="Interaction with tRNA" evidence="1">
    <location>
        <begin position="312"/>
        <end position="313"/>
    </location>
</feature>
<feature type="active site" description="Nucleophile" evidence="1">
    <location>
        <position position="103"/>
    </location>
</feature>
<feature type="active site" description="Cysteine persulfide intermediate" evidence="1">
    <location>
        <position position="200"/>
    </location>
</feature>
<feature type="binding site" evidence="1">
    <location>
        <begin position="12"/>
        <end position="19"/>
    </location>
    <ligand>
        <name>ATP</name>
        <dbReference type="ChEBI" id="CHEBI:30616"/>
    </ligand>
</feature>
<feature type="binding site" evidence="1">
    <location>
        <position position="38"/>
    </location>
    <ligand>
        <name>ATP</name>
        <dbReference type="ChEBI" id="CHEBI:30616"/>
    </ligand>
</feature>
<feature type="binding site" evidence="1">
    <location>
        <position position="128"/>
    </location>
    <ligand>
        <name>ATP</name>
        <dbReference type="ChEBI" id="CHEBI:30616"/>
    </ligand>
</feature>
<feature type="site" description="Interaction with tRNA" evidence="1">
    <location>
        <position position="129"/>
    </location>
</feature>
<feature type="site" description="Interaction with tRNA" evidence="1">
    <location>
        <position position="345"/>
    </location>
</feature>
<feature type="disulfide bond" description="Alternate" evidence="1">
    <location>
        <begin position="103"/>
        <end position="200"/>
    </location>
</feature>
<accession>A9R0L5</accession>
<evidence type="ECO:0000255" key="1">
    <source>
        <dbReference type="HAMAP-Rule" id="MF_00144"/>
    </source>
</evidence>
<name>MNMA_YERPG</name>
<protein>
    <recommendedName>
        <fullName evidence="1">tRNA-specific 2-thiouridylase MnmA</fullName>
        <ecNumber evidence="1">2.8.1.13</ecNumber>
    </recommendedName>
</protein>
<gene>
    <name evidence="1" type="primary">mnmA</name>
    <name type="ordered locus">YpAngola_A2851</name>
</gene>
<dbReference type="EC" id="2.8.1.13" evidence="1"/>
<dbReference type="EMBL" id="CP000901">
    <property type="protein sequence ID" value="ABX88182.1"/>
    <property type="molecule type" value="Genomic_DNA"/>
</dbReference>
<dbReference type="RefSeq" id="WP_002210913.1">
    <property type="nucleotide sequence ID" value="NZ_CP009935.1"/>
</dbReference>
<dbReference type="SMR" id="A9R0L5"/>
<dbReference type="GeneID" id="57976935"/>
<dbReference type="KEGG" id="ypg:YpAngola_A2851"/>
<dbReference type="PATRIC" id="fig|349746.12.peg.3889"/>
<dbReference type="GO" id="GO:0005737">
    <property type="term" value="C:cytoplasm"/>
    <property type="evidence" value="ECO:0007669"/>
    <property type="project" value="UniProtKB-SubCell"/>
</dbReference>
<dbReference type="GO" id="GO:0005524">
    <property type="term" value="F:ATP binding"/>
    <property type="evidence" value="ECO:0007669"/>
    <property type="project" value="UniProtKB-KW"/>
</dbReference>
<dbReference type="GO" id="GO:0000049">
    <property type="term" value="F:tRNA binding"/>
    <property type="evidence" value="ECO:0007669"/>
    <property type="project" value="UniProtKB-KW"/>
</dbReference>
<dbReference type="GO" id="GO:0103016">
    <property type="term" value="F:tRNA-uridine 2-sulfurtransferase activity"/>
    <property type="evidence" value="ECO:0007669"/>
    <property type="project" value="UniProtKB-EC"/>
</dbReference>
<dbReference type="GO" id="GO:0002143">
    <property type="term" value="P:tRNA wobble position uridine thiolation"/>
    <property type="evidence" value="ECO:0007669"/>
    <property type="project" value="TreeGrafter"/>
</dbReference>
<dbReference type="CDD" id="cd01998">
    <property type="entry name" value="MnmA_TRMU-like"/>
    <property type="match status" value="1"/>
</dbReference>
<dbReference type="FunFam" id="2.30.30.280:FF:000001">
    <property type="entry name" value="tRNA-specific 2-thiouridylase MnmA"/>
    <property type="match status" value="1"/>
</dbReference>
<dbReference type="FunFam" id="2.40.30.10:FF:000023">
    <property type="entry name" value="tRNA-specific 2-thiouridylase MnmA"/>
    <property type="match status" value="1"/>
</dbReference>
<dbReference type="FunFam" id="3.40.50.620:FF:000004">
    <property type="entry name" value="tRNA-specific 2-thiouridylase MnmA"/>
    <property type="match status" value="1"/>
</dbReference>
<dbReference type="Gene3D" id="2.30.30.280">
    <property type="entry name" value="Adenine nucleotide alpha hydrolases-like domains"/>
    <property type="match status" value="1"/>
</dbReference>
<dbReference type="Gene3D" id="3.40.50.620">
    <property type="entry name" value="HUPs"/>
    <property type="match status" value="1"/>
</dbReference>
<dbReference type="Gene3D" id="2.40.30.10">
    <property type="entry name" value="Translation factors"/>
    <property type="match status" value="1"/>
</dbReference>
<dbReference type="HAMAP" id="MF_00144">
    <property type="entry name" value="tRNA_thiouridyl_MnmA"/>
    <property type="match status" value="1"/>
</dbReference>
<dbReference type="InterPro" id="IPR004506">
    <property type="entry name" value="MnmA-like"/>
</dbReference>
<dbReference type="InterPro" id="IPR046885">
    <property type="entry name" value="MnmA-like_C"/>
</dbReference>
<dbReference type="InterPro" id="IPR046884">
    <property type="entry name" value="MnmA-like_central"/>
</dbReference>
<dbReference type="InterPro" id="IPR023382">
    <property type="entry name" value="MnmA-like_central_sf"/>
</dbReference>
<dbReference type="InterPro" id="IPR014729">
    <property type="entry name" value="Rossmann-like_a/b/a_fold"/>
</dbReference>
<dbReference type="NCBIfam" id="NF001138">
    <property type="entry name" value="PRK00143.1"/>
    <property type="match status" value="1"/>
</dbReference>
<dbReference type="NCBIfam" id="TIGR00420">
    <property type="entry name" value="trmU"/>
    <property type="match status" value="1"/>
</dbReference>
<dbReference type="PANTHER" id="PTHR11933:SF5">
    <property type="entry name" value="MITOCHONDRIAL TRNA-SPECIFIC 2-THIOURIDYLASE 1"/>
    <property type="match status" value="1"/>
</dbReference>
<dbReference type="PANTHER" id="PTHR11933">
    <property type="entry name" value="TRNA 5-METHYLAMINOMETHYL-2-THIOURIDYLATE -METHYLTRANSFERASE"/>
    <property type="match status" value="1"/>
</dbReference>
<dbReference type="Pfam" id="PF03054">
    <property type="entry name" value="tRNA_Me_trans"/>
    <property type="match status" value="1"/>
</dbReference>
<dbReference type="Pfam" id="PF20258">
    <property type="entry name" value="tRNA_Me_trans_C"/>
    <property type="match status" value="1"/>
</dbReference>
<dbReference type="Pfam" id="PF20259">
    <property type="entry name" value="tRNA_Me_trans_M"/>
    <property type="match status" value="1"/>
</dbReference>
<dbReference type="SUPFAM" id="SSF52402">
    <property type="entry name" value="Adenine nucleotide alpha hydrolases-like"/>
    <property type="match status" value="1"/>
</dbReference>
<comment type="function">
    <text evidence="1">Catalyzes the 2-thiolation of uridine at the wobble position (U34) of tRNA(Lys), tRNA(Glu) and tRNA(Gln), leading to the formation of s(2)U34, the first step of tRNA-mnm(5)s(2)U34 synthesis. Sulfur is provided by IscS, via a sulfur-relay system. Binds ATP and its substrate tRNAs.</text>
</comment>
<comment type="catalytic activity">
    <reaction evidence="1">
        <text>S-sulfanyl-L-cysteinyl-[protein] + uridine(34) in tRNA + AH2 + ATP = 2-thiouridine(34) in tRNA + L-cysteinyl-[protein] + A + AMP + diphosphate + H(+)</text>
        <dbReference type="Rhea" id="RHEA:47032"/>
        <dbReference type="Rhea" id="RHEA-COMP:10131"/>
        <dbReference type="Rhea" id="RHEA-COMP:11726"/>
        <dbReference type="Rhea" id="RHEA-COMP:11727"/>
        <dbReference type="Rhea" id="RHEA-COMP:11728"/>
        <dbReference type="ChEBI" id="CHEBI:13193"/>
        <dbReference type="ChEBI" id="CHEBI:15378"/>
        <dbReference type="ChEBI" id="CHEBI:17499"/>
        <dbReference type="ChEBI" id="CHEBI:29950"/>
        <dbReference type="ChEBI" id="CHEBI:30616"/>
        <dbReference type="ChEBI" id="CHEBI:33019"/>
        <dbReference type="ChEBI" id="CHEBI:61963"/>
        <dbReference type="ChEBI" id="CHEBI:65315"/>
        <dbReference type="ChEBI" id="CHEBI:87170"/>
        <dbReference type="ChEBI" id="CHEBI:456215"/>
        <dbReference type="EC" id="2.8.1.13"/>
    </reaction>
</comment>
<comment type="subunit">
    <text evidence="1">Interacts with TusE.</text>
</comment>
<comment type="subcellular location">
    <subcellularLocation>
        <location evidence="1">Cytoplasm</location>
    </subcellularLocation>
</comment>
<comment type="similarity">
    <text evidence="1">Belongs to the MnmA/TRMU family.</text>
</comment>
<keyword id="KW-0067">ATP-binding</keyword>
<keyword id="KW-0963">Cytoplasm</keyword>
<keyword id="KW-1015">Disulfide bond</keyword>
<keyword id="KW-0547">Nucleotide-binding</keyword>
<keyword id="KW-0694">RNA-binding</keyword>
<keyword id="KW-0808">Transferase</keyword>
<keyword id="KW-0819">tRNA processing</keyword>
<keyword id="KW-0820">tRNA-binding</keyword>
<organism>
    <name type="scientific">Yersinia pestis bv. Antiqua (strain Angola)</name>
    <dbReference type="NCBI Taxonomy" id="349746"/>
    <lineage>
        <taxon>Bacteria</taxon>
        <taxon>Pseudomonadati</taxon>
        <taxon>Pseudomonadota</taxon>
        <taxon>Gammaproteobacteria</taxon>
        <taxon>Enterobacterales</taxon>
        <taxon>Yersiniaceae</taxon>
        <taxon>Yersinia</taxon>
    </lineage>
</organism>
<reference key="1">
    <citation type="journal article" date="2010" name="J. Bacteriol.">
        <title>Genome sequence of the deep-rooted Yersinia pestis strain Angola reveals new insights into the evolution and pangenome of the plague bacterium.</title>
        <authorList>
            <person name="Eppinger M."/>
            <person name="Worsham P.L."/>
            <person name="Nikolich M.P."/>
            <person name="Riley D.R."/>
            <person name="Sebastian Y."/>
            <person name="Mou S."/>
            <person name="Achtman M."/>
            <person name="Lindler L.E."/>
            <person name="Ravel J."/>
        </authorList>
    </citation>
    <scope>NUCLEOTIDE SEQUENCE [LARGE SCALE GENOMIC DNA]</scope>
    <source>
        <strain>Angola</strain>
    </source>
</reference>
<sequence length="371" mass="41366">MSDNSQKKVIVGMSGGVDSSVSAYLLQQQGYQVAGLFMKNWEEDDDEEYCSAATDLADAQAVCDKLGMELHTVNFAAEYWDNVFELFLAEYKAGRTPNPDILCNKEIKFKAFLEFAAEDLGADYIATGHYVRRQDVDGKSRLLRGLDGNKDQSYFLYTLSHEQIAQSLFPVGELEKPEVRRIAEQLDLVTAKKKDSTGICFIGERKFRDFLGRYLPAQPGPIMTVDGQLVGKHQGLMYHTLGQRKGLGIGGTKEGGDDPWYVVDKDLDSNTLLVAQGHEHPRLMSVGLVAQQLHWVDRQPVTAPFRCVVKTRYRQQDIPCTVTPLDDERVDVRFDDPVAAVTPGQSAVFYQGEICLGGGIIEQRYPLTNPA</sequence>